<feature type="chain" id="PRO_1000019303" description="Ferrochelatase">
    <location>
        <begin position="1"/>
        <end position="333"/>
    </location>
</feature>
<feature type="binding site" evidence="1">
    <location>
        <position position="202"/>
    </location>
    <ligand>
        <name>Fe cation</name>
        <dbReference type="ChEBI" id="CHEBI:24875"/>
    </ligand>
</feature>
<feature type="binding site" evidence="1">
    <location>
        <position position="284"/>
    </location>
    <ligand>
        <name>Fe cation</name>
        <dbReference type="ChEBI" id="CHEBI:24875"/>
    </ligand>
</feature>
<protein>
    <recommendedName>
        <fullName evidence="1">Ferrochelatase</fullName>
        <ecNumber evidence="1">4.98.1.1</ecNumber>
    </recommendedName>
    <alternativeName>
        <fullName evidence="1">Heme synthase</fullName>
    </alternativeName>
    <alternativeName>
        <fullName evidence="1">Protoheme ferro-lyase</fullName>
    </alternativeName>
</protein>
<organism>
    <name type="scientific">Francisella tularensis subsp. holarctica (strain OSU18)</name>
    <dbReference type="NCBI Taxonomy" id="393011"/>
    <lineage>
        <taxon>Bacteria</taxon>
        <taxon>Pseudomonadati</taxon>
        <taxon>Pseudomonadota</taxon>
        <taxon>Gammaproteobacteria</taxon>
        <taxon>Thiotrichales</taxon>
        <taxon>Francisellaceae</taxon>
        <taxon>Francisella</taxon>
    </lineage>
</organism>
<gene>
    <name evidence="1" type="primary">hemH</name>
    <name type="ordered locus">FTH_0813</name>
</gene>
<accession>Q0BME1</accession>
<sequence length="333" mass="39062">MQQYSSKYNKQAILLVNLGTPDNYDTKSIKRYLKEFLSDPRVIEANPILWKIILNLIILPIRAKKNIHTYKTVWNKQHNKSPLLFYTENLADKLDKKLDNYIVDYAMRYGNPSIESKIKSLQDQGATEIIIFPLYPQYSATTTATVYDEVYRVLSKLRWQPTIKGINPYYDNKFHIQTISQQIKEHLKKLDSTPDTVLFSFHGLPKEYFDKGDPYYCHCYKTYRLVKEELQNEYPNIDFELSFQSRFGPKKWLEPYTTVKLEEFAKQNKSVVIIAPGFSADCLETLEELAISEKENFIKKGGKEFSLIPCLNDSNQHVDMLYNIIDEEICLKK</sequence>
<comment type="function">
    <text evidence="1">Catalyzes the ferrous insertion into protoporphyrin IX.</text>
</comment>
<comment type="catalytic activity">
    <reaction evidence="1">
        <text>heme b + 2 H(+) = protoporphyrin IX + Fe(2+)</text>
        <dbReference type="Rhea" id="RHEA:22584"/>
        <dbReference type="ChEBI" id="CHEBI:15378"/>
        <dbReference type="ChEBI" id="CHEBI:29033"/>
        <dbReference type="ChEBI" id="CHEBI:57306"/>
        <dbReference type="ChEBI" id="CHEBI:60344"/>
        <dbReference type="EC" id="4.98.1.1"/>
    </reaction>
</comment>
<comment type="pathway">
    <text evidence="1">Porphyrin-containing compound metabolism; protoheme biosynthesis; protoheme from protoporphyrin-IX: step 1/1.</text>
</comment>
<comment type="subcellular location">
    <subcellularLocation>
        <location evidence="1">Cytoplasm</location>
    </subcellularLocation>
</comment>
<comment type="similarity">
    <text evidence="1">Belongs to the ferrochelatase family.</text>
</comment>
<dbReference type="EC" id="4.98.1.1" evidence="1"/>
<dbReference type="EMBL" id="CP000437">
    <property type="protein sequence ID" value="ABI82743.1"/>
    <property type="molecule type" value="Genomic_DNA"/>
</dbReference>
<dbReference type="RefSeq" id="WP_003015386.1">
    <property type="nucleotide sequence ID" value="NC_017463.1"/>
</dbReference>
<dbReference type="SMR" id="Q0BME1"/>
<dbReference type="KEGG" id="fth:FTH_0813"/>
<dbReference type="UniPathway" id="UPA00252">
    <property type="reaction ID" value="UER00325"/>
</dbReference>
<dbReference type="GO" id="GO:0005737">
    <property type="term" value="C:cytoplasm"/>
    <property type="evidence" value="ECO:0007669"/>
    <property type="project" value="UniProtKB-SubCell"/>
</dbReference>
<dbReference type="GO" id="GO:0004325">
    <property type="term" value="F:ferrochelatase activity"/>
    <property type="evidence" value="ECO:0007669"/>
    <property type="project" value="UniProtKB-UniRule"/>
</dbReference>
<dbReference type="GO" id="GO:0046872">
    <property type="term" value="F:metal ion binding"/>
    <property type="evidence" value="ECO:0007669"/>
    <property type="project" value="UniProtKB-KW"/>
</dbReference>
<dbReference type="GO" id="GO:0006783">
    <property type="term" value="P:heme biosynthetic process"/>
    <property type="evidence" value="ECO:0007669"/>
    <property type="project" value="UniProtKB-UniRule"/>
</dbReference>
<dbReference type="CDD" id="cd00419">
    <property type="entry name" value="Ferrochelatase_C"/>
    <property type="match status" value="1"/>
</dbReference>
<dbReference type="CDD" id="cd03411">
    <property type="entry name" value="Ferrochelatase_N"/>
    <property type="match status" value="1"/>
</dbReference>
<dbReference type="FunFam" id="3.40.50.1400:FF:000002">
    <property type="entry name" value="Ferrochelatase"/>
    <property type="match status" value="1"/>
</dbReference>
<dbReference type="Gene3D" id="3.40.50.1400">
    <property type="match status" value="2"/>
</dbReference>
<dbReference type="HAMAP" id="MF_00323">
    <property type="entry name" value="Ferrochelatase"/>
    <property type="match status" value="1"/>
</dbReference>
<dbReference type="InterPro" id="IPR001015">
    <property type="entry name" value="Ferrochelatase"/>
</dbReference>
<dbReference type="InterPro" id="IPR019772">
    <property type="entry name" value="Ferrochelatase_AS"/>
</dbReference>
<dbReference type="InterPro" id="IPR033644">
    <property type="entry name" value="Ferrochelatase_C"/>
</dbReference>
<dbReference type="InterPro" id="IPR033659">
    <property type="entry name" value="Ferrochelatase_N"/>
</dbReference>
<dbReference type="NCBIfam" id="TIGR00109">
    <property type="entry name" value="hemH"/>
    <property type="match status" value="1"/>
</dbReference>
<dbReference type="PANTHER" id="PTHR11108">
    <property type="entry name" value="FERROCHELATASE"/>
    <property type="match status" value="1"/>
</dbReference>
<dbReference type="PANTHER" id="PTHR11108:SF1">
    <property type="entry name" value="FERROCHELATASE, MITOCHONDRIAL"/>
    <property type="match status" value="1"/>
</dbReference>
<dbReference type="Pfam" id="PF00762">
    <property type="entry name" value="Ferrochelatase"/>
    <property type="match status" value="1"/>
</dbReference>
<dbReference type="SUPFAM" id="SSF53800">
    <property type="entry name" value="Chelatase"/>
    <property type="match status" value="1"/>
</dbReference>
<dbReference type="PROSITE" id="PS00534">
    <property type="entry name" value="FERROCHELATASE"/>
    <property type="match status" value="1"/>
</dbReference>
<reference key="1">
    <citation type="journal article" date="2006" name="J. Bacteriol.">
        <title>Chromosome rearrangement and diversification of Francisella tularensis revealed by the type B (OSU18) genome sequence.</title>
        <authorList>
            <person name="Petrosino J.F."/>
            <person name="Xiang Q."/>
            <person name="Karpathy S.E."/>
            <person name="Jiang H."/>
            <person name="Yerrapragada S."/>
            <person name="Liu Y."/>
            <person name="Gioia J."/>
            <person name="Hemphill L."/>
            <person name="Gonzalez A."/>
            <person name="Raghavan T.M."/>
            <person name="Uzman A."/>
            <person name="Fox G.E."/>
            <person name="Highlander S."/>
            <person name="Reichard M."/>
            <person name="Morton R.J."/>
            <person name="Clinkenbeard K.D."/>
            <person name="Weinstock G.M."/>
        </authorList>
    </citation>
    <scope>NUCLEOTIDE SEQUENCE [LARGE SCALE GENOMIC DNA]</scope>
    <source>
        <strain>OSU18</strain>
    </source>
</reference>
<proteinExistence type="inferred from homology"/>
<name>HEMH_FRATO</name>
<evidence type="ECO:0000255" key="1">
    <source>
        <dbReference type="HAMAP-Rule" id="MF_00323"/>
    </source>
</evidence>
<keyword id="KW-0963">Cytoplasm</keyword>
<keyword id="KW-0350">Heme biosynthesis</keyword>
<keyword id="KW-0408">Iron</keyword>
<keyword id="KW-0456">Lyase</keyword>
<keyword id="KW-0479">Metal-binding</keyword>
<keyword id="KW-0627">Porphyrin biosynthesis</keyword>